<protein>
    <recommendedName>
        <fullName>Fasciclin-like arabinogalactan protein 4</fullName>
    </recommendedName>
    <alternativeName>
        <fullName>Protein SALT OVERLY SENSITIVE 5</fullName>
    </alternativeName>
</protein>
<name>FLA4_ARATH</name>
<dbReference type="EMBL" id="AL133314">
    <property type="protein sequence ID" value="CAB62325.1"/>
    <property type="molecule type" value="Genomic_DNA"/>
</dbReference>
<dbReference type="EMBL" id="CP002686">
    <property type="protein sequence ID" value="AEE78171.1"/>
    <property type="molecule type" value="Genomic_DNA"/>
</dbReference>
<dbReference type="PIR" id="T45592">
    <property type="entry name" value="T45592"/>
</dbReference>
<dbReference type="RefSeq" id="NP_190239.1">
    <property type="nucleotide sequence ID" value="NM_114522.4"/>
</dbReference>
<dbReference type="SMR" id="Q9SNC3"/>
<dbReference type="BioGRID" id="9128">
    <property type="interactions" value="1"/>
</dbReference>
<dbReference type="FunCoup" id="Q9SNC3">
    <property type="interactions" value="24"/>
</dbReference>
<dbReference type="STRING" id="3702.Q9SNC3"/>
<dbReference type="GlyCosmos" id="Q9SNC3">
    <property type="glycosylation" value="8 sites, No reported glycans"/>
</dbReference>
<dbReference type="GlyGen" id="Q9SNC3">
    <property type="glycosylation" value="8 sites"/>
</dbReference>
<dbReference type="PaxDb" id="3702-AT3G46550.1"/>
<dbReference type="ProteomicsDB" id="230520"/>
<dbReference type="EnsemblPlants" id="AT3G46550.1">
    <property type="protein sequence ID" value="AT3G46550.1"/>
    <property type="gene ID" value="AT3G46550"/>
</dbReference>
<dbReference type="GeneID" id="823808"/>
<dbReference type="Gramene" id="AT3G46550.1">
    <property type="protein sequence ID" value="AT3G46550.1"/>
    <property type="gene ID" value="AT3G46550"/>
</dbReference>
<dbReference type="KEGG" id="ath:AT3G46550"/>
<dbReference type="Araport" id="AT3G46550"/>
<dbReference type="TAIR" id="AT3G46550">
    <property type="gene designation" value="SOS5"/>
</dbReference>
<dbReference type="eggNOG" id="ENOG502QVC9">
    <property type="taxonomic scope" value="Eukaryota"/>
</dbReference>
<dbReference type="HOGENOM" id="CLU_036139_3_0_1"/>
<dbReference type="InParanoid" id="Q9SNC3"/>
<dbReference type="OMA" id="GIFLWCI"/>
<dbReference type="OrthoDB" id="286301at2759"/>
<dbReference type="PhylomeDB" id="Q9SNC3"/>
<dbReference type="PRO" id="PR:Q9SNC3"/>
<dbReference type="Proteomes" id="UP000006548">
    <property type="component" value="Chromosome 3"/>
</dbReference>
<dbReference type="ExpressionAtlas" id="Q9SNC3">
    <property type="expression patterns" value="baseline and differential"/>
</dbReference>
<dbReference type="GO" id="GO:0009897">
    <property type="term" value="C:external side of plasma membrane"/>
    <property type="evidence" value="ECO:0000314"/>
    <property type="project" value="TAIR"/>
</dbReference>
<dbReference type="GO" id="GO:0005886">
    <property type="term" value="C:plasma membrane"/>
    <property type="evidence" value="ECO:0007005"/>
    <property type="project" value="TAIR"/>
</dbReference>
<dbReference type="GO" id="GO:0030247">
    <property type="term" value="F:polysaccharide binding"/>
    <property type="evidence" value="ECO:0000304"/>
    <property type="project" value="TAIR"/>
</dbReference>
<dbReference type="GO" id="GO:0009738">
    <property type="term" value="P:abscisic acid-activated signaling pathway"/>
    <property type="evidence" value="ECO:0000316"/>
    <property type="project" value="TAIR"/>
</dbReference>
<dbReference type="GO" id="GO:0007155">
    <property type="term" value="P:cell adhesion"/>
    <property type="evidence" value="ECO:0000250"/>
    <property type="project" value="TAIR"/>
</dbReference>
<dbReference type="GO" id="GO:0010192">
    <property type="term" value="P:mucilage biosynthetic process"/>
    <property type="evidence" value="ECO:0000315"/>
    <property type="project" value="TAIR"/>
</dbReference>
<dbReference type="GO" id="GO:0048354">
    <property type="term" value="P:mucilage biosynthetic process involved in seed coat development"/>
    <property type="evidence" value="ECO:0000315"/>
    <property type="project" value="TAIR"/>
</dbReference>
<dbReference type="GO" id="GO:0009825">
    <property type="term" value="P:multidimensional cell growth"/>
    <property type="evidence" value="ECO:0000315"/>
    <property type="project" value="TAIR"/>
</dbReference>
<dbReference type="GO" id="GO:0009651">
    <property type="term" value="P:response to salt stress"/>
    <property type="evidence" value="ECO:0000315"/>
    <property type="project" value="TAIR"/>
</dbReference>
<dbReference type="FunFam" id="2.30.180.10:FF:000013">
    <property type="entry name" value="Fasciclin-like arabinogalactan protein 4"/>
    <property type="match status" value="1"/>
</dbReference>
<dbReference type="Gene3D" id="2.30.180.10">
    <property type="entry name" value="FAS1 domain"/>
    <property type="match status" value="2"/>
</dbReference>
<dbReference type="InterPro" id="IPR036378">
    <property type="entry name" value="FAS1_dom_sf"/>
</dbReference>
<dbReference type="InterPro" id="IPR000782">
    <property type="entry name" value="FAS1_domain"/>
</dbReference>
<dbReference type="InterPro" id="IPR033254">
    <property type="entry name" value="Plant_FLA"/>
</dbReference>
<dbReference type="PANTHER" id="PTHR32382">
    <property type="entry name" value="FASCICLIN-LIKE ARABINOGALACTAN PROTEIN"/>
    <property type="match status" value="1"/>
</dbReference>
<dbReference type="PANTHER" id="PTHR32382:SF0">
    <property type="entry name" value="FASCICLIN-LIKE ARABINOGALACTAN PROTEIN 4"/>
    <property type="match status" value="1"/>
</dbReference>
<dbReference type="Pfam" id="PF02469">
    <property type="entry name" value="Fasciclin"/>
    <property type="match status" value="2"/>
</dbReference>
<dbReference type="SMART" id="SM00554">
    <property type="entry name" value="FAS1"/>
    <property type="match status" value="2"/>
</dbReference>
<dbReference type="SUPFAM" id="SSF82153">
    <property type="entry name" value="FAS1 domain"/>
    <property type="match status" value="2"/>
</dbReference>
<dbReference type="PROSITE" id="PS50213">
    <property type="entry name" value="FAS1"/>
    <property type="match status" value="2"/>
</dbReference>
<evidence type="ECO:0000255" key="1"/>
<evidence type="ECO:0000255" key="2">
    <source>
        <dbReference type="PROSITE-ProRule" id="PRU00082"/>
    </source>
</evidence>
<evidence type="ECO:0000256" key="3">
    <source>
        <dbReference type="SAM" id="MobiDB-lite"/>
    </source>
</evidence>
<evidence type="ECO:0000269" key="4">
    <source>
    </source>
</evidence>
<evidence type="ECO:0000305" key="5"/>
<reference key="1">
    <citation type="journal article" date="2003" name="Plant Cell">
        <title>The Arabidopsis SOS5 locus encodes a putative cell surface adhesion protein and is required for normal cell expansion.</title>
        <authorList>
            <person name="Shi H."/>
            <person name="Kim Y."/>
            <person name="Guo Y."/>
            <person name="Stevenson B."/>
            <person name="Zhu J.-K."/>
        </authorList>
    </citation>
    <scope>NUCLEOTIDE SEQUENCE [MRNA]</scope>
    <scope>MUTAGENESIS OF SER-348</scope>
    <scope>INDUCTION</scope>
    <scope>SUBCELLULAR LOCATION</scope>
    <scope>TISSUE SPECIFICITY</scope>
</reference>
<reference key="2">
    <citation type="journal article" date="2000" name="Nature">
        <title>Sequence and analysis of chromosome 3 of the plant Arabidopsis thaliana.</title>
        <authorList>
            <person name="Salanoubat M."/>
            <person name="Lemcke K."/>
            <person name="Rieger M."/>
            <person name="Ansorge W."/>
            <person name="Unseld M."/>
            <person name="Fartmann B."/>
            <person name="Valle G."/>
            <person name="Bloecker H."/>
            <person name="Perez-Alonso M."/>
            <person name="Obermaier B."/>
            <person name="Delseny M."/>
            <person name="Boutry M."/>
            <person name="Grivell L.A."/>
            <person name="Mache R."/>
            <person name="Puigdomenech P."/>
            <person name="De Simone V."/>
            <person name="Choisne N."/>
            <person name="Artiguenave F."/>
            <person name="Robert C."/>
            <person name="Brottier P."/>
            <person name="Wincker P."/>
            <person name="Cattolico L."/>
            <person name="Weissenbach J."/>
            <person name="Saurin W."/>
            <person name="Quetier F."/>
            <person name="Schaefer M."/>
            <person name="Mueller-Auer S."/>
            <person name="Gabel C."/>
            <person name="Fuchs M."/>
            <person name="Benes V."/>
            <person name="Wurmbach E."/>
            <person name="Drzonek H."/>
            <person name="Erfle H."/>
            <person name="Jordan N."/>
            <person name="Bangert S."/>
            <person name="Wiedelmann R."/>
            <person name="Kranz H."/>
            <person name="Voss H."/>
            <person name="Holland R."/>
            <person name="Brandt P."/>
            <person name="Nyakatura G."/>
            <person name="Vezzi A."/>
            <person name="D'Angelo M."/>
            <person name="Pallavicini A."/>
            <person name="Toppo S."/>
            <person name="Simionati B."/>
            <person name="Conrad A."/>
            <person name="Hornischer K."/>
            <person name="Kauer G."/>
            <person name="Loehnert T.-H."/>
            <person name="Nordsiek G."/>
            <person name="Reichelt J."/>
            <person name="Scharfe M."/>
            <person name="Schoen O."/>
            <person name="Bargues M."/>
            <person name="Terol J."/>
            <person name="Climent J."/>
            <person name="Navarro P."/>
            <person name="Collado C."/>
            <person name="Perez-Perez A."/>
            <person name="Ottenwaelder B."/>
            <person name="Duchemin D."/>
            <person name="Cooke R."/>
            <person name="Laudie M."/>
            <person name="Berger-Llauro C."/>
            <person name="Purnelle B."/>
            <person name="Masuy D."/>
            <person name="de Haan M."/>
            <person name="Maarse A.C."/>
            <person name="Alcaraz J.-P."/>
            <person name="Cottet A."/>
            <person name="Casacuberta E."/>
            <person name="Monfort A."/>
            <person name="Argiriou A."/>
            <person name="Flores M."/>
            <person name="Liguori R."/>
            <person name="Vitale D."/>
            <person name="Mannhaupt G."/>
            <person name="Haase D."/>
            <person name="Schoof H."/>
            <person name="Rudd S."/>
            <person name="Zaccaria P."/>
            <person name="Mewes H.-W."/>
            <person name="Mayer K.F.X."/>
            <person name="Kaul S."/>
            <person name="Town C.D."/>
            <person name="Koo H.L."/>
            <person name="Tallon L.J."/>
            <person name="Jenkins J."/>
            <person name="Rooney T."/>
            <person name="Rizzo M."/>
            <person name="Walts A."/>
            <person name="Utterback T."/>
            <person name="Fujii C.Y."/>
            <person name="Shea T.P."/>
            <person name="Creasy T.H."/>
            <person name="Haas B."/>
            <person name="Maiti R."/>
            <person name="Wu D."/>
            <person name="Peterson J."/>
            <person name="Van Aken S."/>
            <person name="Pai G."/>
            <person name="Militscher J."/>
            <person name="Sellers P."/>
            <person name="Gill J.E."/>
            <person name="Feldblyum T.V."/>
            <person name="Preuss D."/>
            <person name="Lin X."/>
            <person name="Nierman W.C."/>
            <person name="Salzberg S.L."/>
            <person name="White O."/>
            <person name="Venter J.C."/>
            <person name="Fraser C.M."/>
            <person name="Kaneko T."/>
            <person name="Nakamura Y."/>
            <person name="Sato S."/>
            <person name="Kato T."/>
            <person name="Asamizu E."/>
            <person name="Sasamoto S."/>
            <person name="Kimura T."/>
            <person name="Idesawa K."/>
            <person name="Kawashima K."/>
            <person name="Kishida Y."/>
            <person name="Kiyokawa C."/>
            <person name="Kohara M."/>
            <person name="Matsumoto M."/>
            <person name="Matsuno A."/>
            <person name="Muraki A."/>
            <person name="Nakayama S."/>
            <person name="Nakazaki N."/>
            <person name="Shinpo S."/>
            <person name="Takeuchi C."/>
            <person name="Wada T."/>
            <person name="Watanabe A."/>
            <person name="Yamada M."/>
            <person name="Yasuda M."/>
            <person name="Tabata S."/>
        </authorList>
    </citation>
    <scope>NUCLEOTIDE SEQUENCE [LARGE SCALE GENOMIC DNA]</scope>
    <source>
        <strain>cv. Columbia</strain>
    </source>
</reference>
<reference key="3">
    <citation type="journal article" date="2017" name="Plant J.">
        <title>Araport11: a complete reannotation of the Arabidopsis thaliana reference genome.</title>
        <authorList>
            <person name="Cheng C.Y."/>
            <person name="Krishnakumar V."/>
            <person name="Chan A.P."/>
            <person name="Thibaud-Nissen F."/>
            <person name="Schobel S."/>
            <person name="Town C.D."/>
        </authorList>
    </citation>
    <scope>GENOME REANNOTATION</scope>
    <source>
        <strain>cv. Columbia</strain>
    </source>
</reference>
<reference key="4">
    <citation type="journal article" date="2003" name="Plant Physiol.">
        <title>The fasciclin-like arabinogalactan proteins of Arabidopsis. A multigene family of putative cell adhesion molecules.</title>
        <authorList>
            <person name="Johnson K.L."/>
            <person name="Jones B.J."/>
            <person name="Bacic A."/>
            <person name="Schultz C.J."/>
        </authorList>
    </citation>
    <scope>GENE FAMILY ORGANIZATION</scope>
    <scope>NOMENCLATURE</scope>
</reference>
<sequence length="420" mass="44239">MANVISISHFTLLALPYLLLLLSSTAAAINVTAVLSSFPNLSSFSNLLVSSGIAAELSGRNSLTLLAVPNSQFSSASLDLTRRLPPSALADLLRFHVLLQFLSDSDLRRIPPSGSAVTTLYEASGRTFFGSGSVNVTRDPASGSVTIGSPATKNVTVLKLLETKPPNITVLTVDSLIVPTGIDITASETLTPPPTSTSLSPPPAGINLTQILINGHNFNVALSLLVASGVITEFENDERGAGITVFVPTDSAFSDLPSNVNLQSLPAEQKAFVLKFHVLHSYYTLGSLESITNPVQPTLATEEMGAGSYTLNISRVNGSIVTINSGVVLAVVTQTAFDQNPVSVFGVSKVLLPKELFPKSGQPVATAPPQEISLSPESSSEQPSRLVSPPREIVSSGAVKRPLGFLVLWCWCIAFCYVLV</sequence>
<keyword id="KW-1003">Cell membrane</keyword>
<keyword id="KW-0325">Glycoprotein</keyword>
<keyword id="KW-0336">GPI-anchor</keyword>
<keyword id="KW-0449">Lipoprotein</keyword>
<keyword id="KW-0472">Membrane</keyword>
<keyword id="KW-0654">Proteoglycan</keyword>
<keyword id="KW-1185">Reference proteome</keyword>
<keyword id="KW-0677">Repeat</keyword>
<keyword id="KW-0732">Signal</keyword>
<feature type="signal peptide" evidence="1">
    <location>
        <begin position="1"/>
        <end position="28"/>
    </location>
</feature>
<feature type="chain" id="PRO_0000251263" description="Fasciclin-like arabinogalactan protein 4">
    <location>
        <begin position="29"/>
        <end position="396"/>
    </location>
</feature>
<feature type="propeptide" id="PRO_0000251264" description="Removed in mature form" evidence="1">
    <location>
        <begin position="397"/>
        <end position="420"/>
    </location>
</feature>
<feature type="domain" description="FAS1 1" evidence="2">
    <location>
        <begin position="29"/>
        <end position="177"/>
    </location>
</feature>
<feature type="domain" description="FAS1 2" evidence="2">
    <location>
        <begin position="205"/>
        <end position="351"/>
    </location>
</feature>
<feature type="region of interest" description="Disordered" evidence="3">
    <location>
        <begin position="360"/>
        <end position="388"/>
    </location>
</feature>
<feature type="compositionally biased region" description="Low complexity" evidence="3">
    <location>
        <begin position="368"/>
        <end position="384"/>
    </location>
</feature>
<feature type="lipid moiety-binding region" description="GPI-anchor amidated serine" evidence="1">
    <location>
        <position position="396"/>
    </location>
</feature>
<feature type="glycosylation site" description="N-linked (GlcNAc...) asparagine" evidence="1">
    <location>
        <position position="30"/>
    </location>
</feature>
<feature type="glycosylation site" description="N-linked (GlcNAc...) asparagine" evidence="1">
    <location>
        <position position="40"/>
    </location>
</feature>
<feature type="glycosylation site" description="N-linked (GlcNAc...) asparagine" evidence="1">
    <location>
        <position position="135"/>
    </location>
</feature>
<feature type="glycosylation site" description="N-linked (GlcNAc...) asparagine" evidence="1">
    <location>
        <position position="154"/>
    </location>
</feature>
<feature type="glycosylation site" description="N-linked (GlcNAc...) asparagine" evidence="1">
    <location>
        <position position="167"/>
    </location>
</feature>
<feature type="glycosylation site" description="N-linked (GlcNAc...) asparagine" evidence="1">
    <location>
        <position position="207"/>
    </location>
</feature>
<feature type="glycosylation site" description="N-linked (GlcNAc...) asparagine" evidence="1">
    <location>
        <position position="312"/>
    </location>
</feature>
<feature type="glycosylation site" description="N-linked (GlcNAc...) asparagine" evidence="1">
    <location>
        <position position="317"/>
    </location>
</feature>
<feature type="mutagenesis site" description="Alters the cell wall structure." evidence="4">
    <original>S</original>
    <variation>F</variation>
    <location>
        <position position="348"/>
    </location>
</feature>
<organism>
    <name type="scientific">Arabidopsis thaliana</name>
    <name type="common">Mouse-ear cress</name>
    <dbReference type="NCBI Taxonomy" id="3702"/>
    <lineage>
        <taxon>Eukaryota</taxon>
        <taxon>Viridiplantae</taxon>
        <taxon>Streptophyta</taxon>
        <taxon>Embryophyta</taxon>
        <taxon>Tracheophyta</taxon>
        <taxon>Spermatophyta</taxon>
        <taxon>Magnoliopsida</taxon>
        <taxon>eudicotyledons</taxon>
        <taxon>Gunneridae</taxon>
        <taxon>Pentapetalae</taxon>
        <taxon>rosids</taxon>
        <taxon>malvids</taxon>
        <taxon>Brassicales</taxon>
        <taxon>Brassicaceae</taxon>
        <taxon>Camelineae</taxon>
        <taxon>Arabidopsis</taxon>
    </lineage>
</organism>
<comment type="function">
    <text>May be a cell surface adhesion protein that is required for normal cell expansion.</text>
</comment>
<comment type="subcellular location">
    <subcellularLocation>
        <location evidence="4">Cell membrane</location>
        <topology evidence="4">Lipid-anchor</topology>
        <topology evidence="4">GPI-anchor</topology>
    </subcellularLocation>
</comment>
<comment type="tissue specificity">
    <text evidence="4">Expressed in all plant organs and tissues, including guard cells in the leaf.</text>
</comment>
<comment type="induction">
    <text evidence="4">Up-regulated by abscisic acid, cold and drought treatments, but not by high salt.</text>
</comment>
<comment type="similarity">
    <text evidence="5">Belongs to the fasciclin-like AGP family.</text>
</comment>
<accession>Q9SNC3</accession>
<proteinExistence type="evidence at protein level"/>
<gene>
    <name type="primary">FLA4</name>
    <name type="synonym">SOS5</name>
    <name type="ordered locus">At3g46550</name>
    <name type="ORF">F12A12.70</name>
</gene>